<feature type="initiator methionine" description="Removed" evidence="3">
    <location>
        <position position="1"/>
    </location>
</feature>
<feature type="chain" id="PRO_0000206458" description="Probable acetyl-CoA acetyltransferase">
    <location>
        <begin position="2"/>
        <end position="393"/>
    </location>
</feature>
<feature type="propeptide" id="PRO_0000455386" description="Removed; alternate" evidence="3">
    <location>
        <position position="2"/>
    </location>
</feature>
<feature type="chain" id="PRO_0000455387" description="Probable acetyl-CoA acetyltransferase, propeptide removed">
    <location>
        <begin position="3"/>
        <end position="393"/>
    </location>
</feature>
<feature type="active site" description="Acyl-thioester intermediate" evidence="1">
    <location>
        <position position="88"/>
    </location>
</feature>
<feature type="active site" description="Proton acceptor" evidence="2">
    <location>
        <position position="349"/>
    </location>
</feature>
<feature type="active site" description="Proton acceptor" evidence="2">
    <location>
        <position position="379"/>
    </location>
</feature>
<dbReference type="EC" id="2.3.1.9"/>
<dbReference type="EMBL" id="AL123456">
    <property type="protein sequence ID" value="CCP44081.1"/>
    <property type="status" value="ALT_INIT"/>
    <property type="molecule type" value="Genomic_DNA"/>
</dbReference>
<dbReference type="PIR" id="G70769">
    <property type="entry name" value="G70769"/>
</dbReference>
<dbReference type="RefSeq" id="NP_215839.1">
    <property type="nucleotide sequence ID" value="NC_000962.3"/>
</dbReference>
<dbReference type="RefSeq" id="WP_003898824.1">
    <property type="nucleotide sequence ID" value="NC_000962.3"/>
</dbReference>
<dbReference type="RefSeq" id="WP_023637385.1">
    <property type="nucleotide sequence ID" value="NZ_NVQJ01000059.1"/>
</dbReference>
<dbReference type="SMR" id="P9WG69"/>
<dbReference type="FunCoup" id="P9WG69">
    <property type="interactions" value="558"/>
</dbReference>
<dbReference type="STRING" id="83332.Rv1323"/>
<dbReference type="PaxDb" id="83332-Rv1323"/>
<dbReference type="DNASU" id="886904"/>
<dbReference type="GeneID" id="886904"/>
<dbReference type="KEGG" id="mtu:Rv1323"/>
<dbReference type="PATRIC" id="fig|83332.111.peg.1478"/>
<dbReference type="TubercuList" id="Rv1323"/>
<dbReference type="eggNOG" id="COG0183">
    <property type="taxonomic scope" value="Bacteria"/>
</dbReference>
<dbReference type="InParanoid" id="P9WG69"/>
<dbReference type="OrthoDB" id="9764638at2"/>
<dbReference type="PhylomeDB" id="P9WG69"/>
<dbReference type="Proteomes" id="UP000001584">
    <property type="component" value="Chromosome"/>
</dbReference>
<dbReference type="GO" id="GO:0005576">
    <property type="term" value="C:extracellular region"/>
    <property type="evidence" value="ECO:0007005"/>
    <property type="project" value="MTBBASE"/>
</dbReference>
<dbReference type="GO" id="GO:0005886">
    <property type="term" value="C:plasma membrane"/>
    <property type="evidence" value="ECO:0007005"/>
    <property type="project" value="MTBBASE"/>
</dbReference>
<dbReference type="GO" id="GO:0003985">
    <property type="term" value="F:acetyl-CoA C-acetyltransferase activity"/>
    <property type="evidence" value="ECO:0000318"/>
    <property type="project" value="GO_Central"/>
</dbReference>
<dbReference type="CDD" id="cd00751">
    <property type="entry name" value="thiolase"/>
    <property type="match status" value="1"/>
</dbReference>
<dbReference type="Gene3D" id="3.40.47.10">
    <property type="match status" value="2"/>
</dbReference>
<dbReference type="InterPro" id="IPR002155">
    <property type="entry name" value="Thiolase"/>
</dbReference>
<dbReference type="InterPro" id="IPR016039">
    <property type="entry name" value="Thiolase-like"/>
</dbReference>
<dbReference type="InterPro" id="IPR020615">
    <property type="entry name" value="Thiolase_acyl_enz_int_AS"/>
</dbReference>
<dbReference type="InterPro" id="IPR020610">
    <property type="entry name" value="Thiolase_AS"/>
</dbReference>
<dbReference type="InterPro" id="IPR020617">
    <property type="entry name" value="Thiolase_C"/>
</dbReference>
<dbReference type="InterPro" id="IPR020613">
    <property type="entry name" value="Thiolase_CS"/>
</dbReference>
<dbReference type="InterPro" id="IPR020616">
    <property type="entry name" value="Thiolase_N"/>
</dbReference>
<dbReference type="NCBIfam" id="TIGR01930">
    <property type="entry name" value="AcCoA-C-Actrans"/>
    <property type="match status" value="1"/>
</dbReference>
<dbReference type="PANTHER" id="PTHR18919:SF107">
    <property type="entry name" value="ACETYL-COA ACETYLTRANSFERASE, CYTOSOLIC"/>
    <property type="match status" value="1"/>
</dbReference>
<dbReference type="PANTHER" id="PTHR18919">
    <property type="entry name" value="ACETYL-COA C-ACYLTRANSFERASE"/>
    <property type="match status" value="1"/>
</dbReference>
<dbReference type="Pfam" id="PF02803">
    <property type="entry name" value="Thiolase_C"/>
    <property type="match status" value="1"/>
</dbReference>
<dbReference type="Pfam" id="PF00108">
    <property type="entry name" value="Thiolase_N"/>
    <property type="match status" value="1"/>
</dbReference>
<dbReference type="PIRSF" id="PIRSF000429">
    <property type="entry name" value="Ac-CoA_Ac_transf"/>
    <property type="match status" value="1"/>
</dbReference>
<dbReference type="SUPFAM" id="SSF53901">
    <property type="entry name" value="Thiolase-like"/>
    <property type="match status" value="2"/>
</dbReference>
<dbReference type="PROSITE" id="PS00098">
    <property type="entry name" value="THIOLASE_1"/>
    <property type="match status" value="1"/>
</dbReference>
<dbReference type="PROSITE" id="PS00737">
    <property type="entry name" value="THIOLASE_2"/>
    <property type="match status" value="1"/>
</dbReference>
<dbReference type="PROSITE" id="PS00099">
    <property type="entry name" value="THIOLASE_3"/>
    <property type="match status" value="1"/>
</dbReference>
<reference key="1">
    <citation type="journal article" date="1998" name="Nature">
        <title>Deciphering the biology of Mycobacterium tuberculosis from the complete genome sequence.</title>
        <authorList>
            <person name="Cole S.T."/>
            <person name="Brosch R."/>
            <person name="Parkhill J."/>
            <person name="Garnier T."/>
            <person name="Churcher C.M."/>
            <person name="Harris D.E."/>
            <person name="Gordon S.V."/>
            <person name="Eiglmeier K."/>
            <person name="Gas S."/>
            <person name="Barry C.E. III"/>
            <person name="Tekaia F."/>
            <person name="Badcock K."/>
            <person name="Basham D."/>
            <person name="Brown D."/>
            <person name="Chillingworth T."/>
            <person name="Connor R."/>
            <person name="Davies R.M."/>
            <person name="Devlin K."/>
            <person name="Feltwell T."/>
            <person name="Gentles S."/>
            <person name="Hamlin N."/>
            <person name="Holroyd S."/>
            <person name="Hornsby T."/>
            <person name="Jagels K."/>
            <person name="Krogh A."/>
            <person name="McLean J."/>
            <person name="Moule S."/>
            <person name="Murphy L.D."/>
            <person name="Oliver S."/>
            <person name="Osborne J."/>
            <person name="Quail M.A."/>
            <person name="Rajandream M.A."/>
            <person name="Rogers J."/>
            <person name="Rutter S."/>
            <person name="Seeger K."/>
            <person name="Skelton S."/>
            <person name="Squares S."/>
            <person name="Squares R."/>
            <person name="Sulston J.E."/>
            <person name="Taylor K."/>
            <person name="Whitehead S."/>
            <person name="Barrell B.G."/>
        </authorList>
    </citation>
    <scope>NUCLEOTIDE SEQUENCE [LARGE SCALE GENOMIC DNA]</scope>
    <source>
        <strain>ATCC 25618 / H37Rv</strain>
    </source>
</reference>
<reference key="2">
    <citation type="journal article" date="2022" name="Genomics">
        <title>Deep N-terminomics of Mycobacterium tuberculosis H37Rv extensively correct annotated encoding genes.</title>
        <authorList>
            <person name="Shi J."/>
            <person name="Meng S."/>
            <person name="Wan L."/>
            <person name="Zhang Z."/>
            <person name="Jiang S."/>
            <person name="Zhu H."/>
            <person name="Dai E."/>
            <person name="Chang L."/>
            <person name="Gao H."/>
            <person name="Wan K."/>
            <person name="Zhang L."/>
            <person name="Zhao X."/>
            <person name="Liu H."/>
            <person name="Lyu Z."/>
            <person name="Zhang Y."/>
            <person name="Xu P."/>
        </authorList>
    </citation>
    <scope>PROTEIN SEQUENCE OF 2-11</scope>
    <scope>PROTEIN SEQUENCE OF 3-11</scope>
    <scope>SEQUENCE REVISION TO N-TERMINUS</scope>
    <source>
        <strain>H37Rv</strain>
    </source>
</reference>
<reference key="3">
    <citation type="journal article" date="2011" name="Mol. Cell. Proteomics">
        <title>Proteogenomic analysis of Mycobacterium tuberculosis by high resolution mass spectrometry.</title>
        <authorList>
            <person name="Kelkar D.S."/>
            <person name="Kumar D."/>
            <person name="Kumar P."/>
            <person name="Balakrishnan L."/>
            <person name="Muthusamy B."/>
            <person name="Yadav A.K."/>
            <person name="Shrivastava P."/>
            <person name="Marimuthu A."/>
            <person name="Anand S."/>
            <person name="Sundaram H."/>
            <person name="Kingsbury R."/>
            <person name="Harsha H.C."/>
            <person name="Nair B."/>
            <person name="Prasad T.S."/>
            <person name="Chauhan D.S."/>
            <person name="Katoch K."/>
            <person name="Katoch V.M."/>
            <person name="Kumar P."/>
            <person name="Chaerkady R."/>
            <person name="Ramachandran S."/>
            <person name="Dash D."/>
            <person name="Pandey A."/>
        </authorList>
    </citation>
    <scope>IDENTIFICATION BY MASS SPECTROMETRY [LARGE SCALE ANALYSIS]</scope>
    <source>
        <strain>ATCC 25618 / H37Rv</strain>
    </source>
</reference>
<proteinExistence type="evidence at protein level"/>
<protein>
    <recommendedName>
        <fullName>Probable acetyl-CoA acetyltransferase</fullName>
        <ecNumber>2.3.1.9</ecNumber>
    </recommendedName>
    <alternativeName>
        <fullName>Acetoacetyl-CoA thiolase</fullName>
    </alternativeName>
    <component>
        <recommendedName>
            <fullName>Probable acetyl-CoA acetyltransferase, propeptide removed</fullName>
        </recommendedName>
    </component>
</protein>
<comment type="catalytic activity">
    <reaction evidence="2">
        <text>2 acetyl-CoA = acetoacetyl-CoA + CoA</text>
        <dbReference type="Rhea" id="RHEA:21036"/>
        <dbReference type="ChEBI" id="CHEBI:57286"/>
        <dbReference type="ChEBI" id="CHEBI:57287"/>
        <dbReference type="ChEBI" id="CHEBI:57288"/>
        <dbReference type="EC" id="2.3.1.9"/>
    </reaction>
</comment>
<comment type="similarity">
    <text evidence="4">Belongs to the thiolase-like superfamily. Thiolase family.</text>
</comment>
<comment type="caution">
    <text evidence="3">The revised start codon for this protein is ATA.</text>
</comment>
<comment type="sequence caution" evidence="3">
    <conflict type="erroneous initiation">
        <sequence resource="EMBL-CDS" id="CCP44081"/>
    </conflict>
    <text>Truncated N-terminus.</text>
</comment>
<sequence>MTTSVIVAGARTPIGKLMGSLKDFSASELGAIAIKGALEKANVPASLVEYVIMGQVLTAGAGQMPARQAAVAAGIGWDVPALTINKMCLSGIDAIALADQLIRAREFDVVVAGGQESMTKAPHLLMNSRSGYKYGDVTVLDHMAYDGLHDVFTDQPMGALTEQRNDVDMFTRSEQDEYAAASHQKAAAAWKDGVFADEVIPVNIPQRTGDPLQFTEDEGIRANTTAAALAGLKPAFRGDGTITAGSASQISDGAAAVVVMNQEKAQELGLTWLAEIGAHGVVAGPDSTLQSQPANAINKALDREGISVDQLDVVEINEAFAAVALASIRELGLNPQIVNVNGGAIAVGHPLGMSGTRITLHAALQLARRGSGVGVAALCGAGGQGDALILRAG</sequence>
<name>FADA4_MYCTU</name>
<evidence type="ECO:0000250" key="1"/>
<evidence type="ECO:0000255" key="2">
    <source>
        <dbReference type="PROSITE-ProRule" id="PRU10020"/>
    </source>
</evidence>
<evidence type="ECO:0000269" key="3">
    <source>
    </source>
</evidence>
<evidence type="ECO:0000305" key="4"/>
<accession>P9WG69</accession>
<accession>L0T6A9</accession>
<accession>P66926</accession>
<accession>Q10629</accession>
<gene>
    <name type="primary">fadA4</name>
    <name type="ordered locus">Rv1323</name>
    <name type="ORF">MTCY130.08</name>
</gene>
<organism>
    <name type="scientific">Mycobacterium tuberculosis (strain ATCC 25618 / H37Rv)</name>
    <dbReference type="NCBI Taxonomy" id="83332"/>
    <lineage>
        <taxon>Bacteria</taxon>
        <taxon>Bacillati</taxon>
        <taxon>Actinomycetota</taxon>
        <taxon>Actinomycetes</taxon>
        <taxon>Mycobacteriales</taxon>
        <taxon>Mycobacteriaceae</taxon>
        <taxon>Mycobacterium</taxon>
        <taxon>Mycobacterium tuberculosis complex</taxon>
    </lineage>
</organism>
<keyword id="KW-0012">Acyltransferase</keyword>
<keyword id="KW-0903">Direct protein sequencing</keyword>
<keyword id="KW-1185">Reference proteome</keyword>
<keyword id="KW-0808">Transferase</keyword>